<gene>
    <name evidence="1" type="primary">arnB</name>
    <name type="ordered locus">YPK_1831</name>
</gene>
<proteinExistence type="inferred from homology"/>
<feature type="chain" id="PRO_1000137965" description="UDP-4-amino-4-deoxy-L-arabinose--oxoglutarate aminotransferase">
    <location>
        <begin position="1"/>
        <end position="384"/>
    </location>
</feature>
<feature type="modified residue" description="N6-(pyridoxal phosphate)lysine" evidence="1">
    <location>
        <position position="182"/>
    </location>
</feature>
<evidence type="ECO:0000255" key="1">
    <source>
        <dbReference type="HAMAP-Rule" id="MF_01167"/>
    </source>
</evidence>
<dbReference type="EC" id="2.6.1.87" evidence="1"/>
<dbReference type="EMBL" id="CP000950">
    <property type="protein sequence ID" value="ACA68122.1"/>
    <property type="molecule type" value="Genomic_DNA"/>
</dbReference>
<dbReference type="RefSeq" id="WP_002211825.1">
    <property type="nucleotide sequence ID" value="NZ_CP009792.1"/>
</dbReference>
<dbReference type="SMR" id="B1JJ28"/>
<dbReference type="GeneID" id="57976255"/>
<dbReference type="KEGG" id="ypy:YPK_1831"/>
<dbReference type="PATRIC" id="fig|502800.11.peg.2500"/>
<dbReference type="UniPathway" id="UPA00030"/>
<dbReference type="UniPathway" id="UPA00032">
    <property type="reaction ID" value="UER00493"/>
</dbReference>
<dbReference type="GO" id="GO:0016020">
    <property type="term" value="C:membrane"/>
    <property type="evidence" value="ECO:0007669"/>
    <property type="project" value="GOC"/>
</dbReference>
<dbReference type="GO" id="GO:0030170">
    <property type="term" value="F:pyridoxal phosphate binding"/>
    <property type="evidence" value="ECO:0007669"/>
    <property type="project" value="TreeGrafter"/>
</dbReference>
<dbReference type="GO" id="GO:0099620">
    <property type="term" value="F:UDP-4-amino-4-deoxy-L-arabinose aminotransferase"/>
    <property type="evidence" value="ECO:0007669"/>
    <property type="project" value="UniProtKB-EC"/>
</dbReference>
<dbReference type="GO" id="GO:0009245">
    <property type="term" value="P:lipid A biosynthetic process"/>
    <property type="evidence" value="ECO:0007669"/>
    <property type="project" value="UniProtKB-KW"/>
</dbReference>
<dbReference type="GO" id="GO:0009103">
    <property type="term" value="P:lipopolysaccharide biosynthetic process"/>
    <property type="evidence" value="ECO:0007669"/>
    <property type="project" value="UniProtKB-UniRule"/>
</dbReference>
<dbReference type="GO" id="GO:0046677">
    <property type="term" value="P:response to antibiotic"/>
    <property type="evidence" value="ECO:0007669"/>
    <property type="project" value="UniProtKB-KW"/>
</dbReference>
<dbReference type="CDD" id="cd00616">
    <property type="entry name" value="AHBA_syn"/>
    <property type="match status" value="1"/>
</dbReference>
<dbReference type="FunFam" id="3.40.640.10:FF:000040">
    <property type="entry name" value="UDP-4-amino-4-deoxy-L-arabinose--oxoglutarate aminotransferase"/>
    <property type="match status" value="1"/>
</dbReference>
<dbReference type="FunFam" id="3.90.1150.10:FF:000030">
    <property type="entry name" value="UDP-4-amino-4-deoxy-L-arabinose--oxoglutarate aminotransferase"/>
    <property type="match status" value="1"/>
</dbReference>
<dbReference type="Gene3D" id="3.90.1150.10">
    <property type="entry name" value="Aspartate Aminotransferase, domain 1"/>
    <property type="match status" value="1"/>
</dbReference>
<dbReference type="Gene3D" id="3.40.640.10">
    <property type="entry name" value="Type I PLP-dependent aspartate aminotransferase-like (Major domain)"/>
    <property type="match status" value="1"/>
</dbReference>
<dbReference type="HAMAP" id="MF_01167">
    <property type="entry name" value="ArnB_transfer"/>
    <property type="match status" value="1"/>
</dbReference>
<dbReference type="InterPro" id="IPR022850">
    <property type="entry name" value="ArnB_NH2Trfase"/>
</dbReference>
<dbReference type="InterPro" id="IPR000653">
    <property type="entry name" value="DegT/StrS_aminotransferase"/>
</dbReference>
<dbReference type="InterPro" id="IPR015424">
    <property type="entry name" value="PyrdxlP-dep_Trfase"/>
</dbReference>
<dbReference type="InterPro" id="IPR015421">
    <property type="entry name" value="PyrdxlP-dep_Trfase_major"/>
</dbReference>
<dbReference type="InterPro" id="IPR015422">
    <property type="entry name" value="PyrdxlP-dep_Trfase_small"/>
</dbReference>
<dbReference type="NCBIfam" id="NF008658">
    <property type="entry name" value="PRK11658.1"/>
    <property type="match status" value="1"/>
</dbReference>
<dbReference type="PANTHER" id="PTHR30244">
    <property type="entry name" value="TRANSAMINASE"/>
    <property type="match status" value="1"/>
</dbReference>
<dbReference type="PANTHER" id="PTHR30244:SF41">
    <property type="entry name" value="UDP-4-AMINO-4-DEOXY-L-ARABINOSE--OXOGLUTARATE AMINOTRANSFERASE"/>
    <property type="match status" value="1"/>
</dbReference>
<dbReference type="Pfam" id="PF01041">
    <property type="entry name" value="DegT_DnrJ_EryC1"/>
    <property type="match status" value="1"/>
</dbReference>
<dbReference type="PIRSF" id="PIRSF000390">
    <property type="entry name" value="PLP_StrS"/>
    <property type="match status" value="1"/>
</dbReference>
<dbReference type="SUPFAM" id="SSF53383">
    <property type="entry name" value="PLP-dependent transferases"/>
    <property type="match status" value="1"/>
</dbReference>
<keyword id="KW-0032">Aminotransferase</keyword>
<keyword id="KW-0046">Antibiotic resistance</keyword>
<keyword id="KW-0441">Lipid A biosynthesis</keyword>
<keyword id="KW-0444">Lipid biosynthesis</keyword>
<keyword id="KW-0443">Lipid metabolism</keyword>
<keyword id="KW-0448">Lipopolysaccharide biosynthesis</keyword>
<keyword id="KW-0663">Pyridoxal phosphate</keyword>
<keyword id="KW-0808">Transferase</keyword>
<comment type="function">
    <text evidence="1">Catalyzes the conversion of UDP-4-keto-arabinose (UDP-Ara4O) to UDP-4-amino-4-deoxy-L-arabinose (UDP-L-Ara4N). The modified arabinose is attached to lipid A and is required for resistance to polymyxin and cationic antimicrobial peptides.</text>
</comment>
<comment type="catalytic activity">
    <reaction evidence="1">
        <text>UDP-4-amino-4-deoxy-beta-L-arabinose + 2-oxoglutarate = UDP-beta-L-threo-pentopyranos-4-ulose + L-glutamate</text>
        <dbReference type="Rhea" id="RHEA:24710"/>
        <dbReference type="ChEBI" id="CHEBI:16810"/>
        <dbReference type="ChEBI" id="CHEBI:29985"/>
        <dbReference type="ChEBI" id="CHEBI:58708"/>
        <dbReference type="ChEBI" id="CHEBI:58710"/>
        <dbReference type="EC" id="2.6.1.87"/>
    </reaction>
</comment>
<comment type="cofactor">
    <cofactor evidence="1">
        <name>pyridoxal 5'-phosphate</name>
        <dbReference type="ChEBI" id="CHEBI:597326"/>
    </cofactor>
</comment>
<comment type="pathway">
    <text evidence="1">Nucleotide-sugar biosynthesis; UDP-4-deoxy-4-formamido-beta-L-arabinose biosynthesis; UDP-4-deoxy-4-formamido-beta-L-arabinose from UDP-alpha-D-glucuronate: step 2/3.</text>
</comment>
<comment type="pathway">
    <text evidence="1">Bacterial outer membrane biogenesis; lipopolysaccharide biosynthesis.</text>
</comment>
<comment type="subunit">
    <text evidence="1">Homodimer.</text>
</comment>
<comment type="similarity">
    <text evidence="1">Belongs to the DegT/DnrJ/EryC1 family. ArnB subfamily.</text>
</comment>
<organism>
    <name type="scientific">Yersinia pseudotuberculosis serotype O:3 (strain YPIII)</name>
    <dbReference type="NCBI Taxonomy" id="502800"/>
    <lineage>
        <taxon>Bacteria</taxon>
        <taxon>Pseudomonadati</taxon>
        <taxon>Pseudomonadota</taxon>
        <taxon>Gammaproteobacteria</taxon>
        <taxon>Enterobacterales</taxon>
        <taxon>Yersiniaceae</taxon>
        <taxon>Yersinia</taxon>
    </lineage>
</organism>
<protein>
    <recommendedName>
        <fullName evidence="1">UDP-4-amino-4-deoxy-L-arabinose--oxoglutarate aminotransferase</fullName>
        <ecNumber evidence="1">2.6.1.87</ecNumber>
    </recommendedName>
    <alternativeName>
        <fullName evidence="1">UDP-(beta-L-threo-pentapyranosyl-4''-ulose diphosphate) aminotransferase</fullName>
        <shortName evidence="1">UDP-Ara4O aminotransferase</shortName>
    </alternativeName>
    <alternativeName>
        <fullName evidence="1">UDP-4-amino-4-deoxy-L-arabinose aminotransferase</fullName>
    </alternativeName>
</protein>
<reference key="1">
    <citation type="submission" date="2008-02" db="EMBL/GenBank/DDBJ databases">
        <title>Complete sequence of Yersinia pseudotuberculosis YPIII.</title>
        <authorList>
            <consortium name="US DOE Joint Genome Institute"/>
            <person name="Copeland A."/>
            <person name="Lucas S."/>
            <person name="Lapidus A."/>
            <person name="Glavina del Rio T."/>
            <person name="Dalin E."/>
            <person name="Tice H."/>
            <person name="Bruce D."/>
            <person name="Goodwin L."/>
            <person name="Pitluck S."/>
            <person name="Munk A.C."/>
            <person name="Brettin T."/>
            <person name="Detter J.C."/>
            <person name="Han C."/>
            <person name="Tapia R."/>
            <person name="Schmutz J."/>
            <person name="Larimer F."/>
            <person name="Land M."/>
            <person name="Hauser L."/>
            <person name="Challacombe J.F."/>
            <person name="Green L."/>
            <person name="Lindler L.E."/>
            <person name="Nikolich M.P."/>
            <person name="Richardson P."/>
        </authorList>
    </citation>
    <scope>NUCLEOTIDE SEQUENCE [LARGE SCALE GENOMIC DNA]</scope>
    <source>
        <strain>YPIII</strain>
    </source>
</reference>
<sequence>MQSFLPFSRPAIGSEEINAVANVLGSGWITTGPQNHQLETDFCQIFGCKHAIAVCSATAGMHITLLALGIGPGDEVITPSQTWVSTINMIVLLGAEPVMVDVDRDTLMVNAAAIEAAITPNTKAIIPVHYAGAPCDLDALRQISQRHGIPLIEDAAHAVGTRYRDQWIGEQGTAIFSFHAIKNITCAEGGLVATDDDELAARVRRLKFHGLGVDAFDRQIQGRSPQAEVVEPGYKYNLSDIHAAIAVVQLRRLPEINARRQALVASYHKALAHLPLQPLALPHYSHQHAWHLFMVRVDEERCGISRDQLMACLKDMGIGSGLHFRAVHSQKYYRERYPHLCLPNTEWNSARLCTLPLFPDMLDSDIERVANALTTIIGSHRVTK</sequence>
<accession>B1JJ28</accession>
<name>ARNB_YERPY</name>